<dbReference type="EC" id="4.2.1.33" evidence="1"/>
<dbReference type="EMBL" id="CP000521">
    <property type="protein sequence ID" value="ABO10873.1"/>
    <property type="molecule type" value="Genomic_DNA"/>
</dbReference>
<dbReference type="RefSeq" id="WP_000649450.1">
    <property type="nucleotide sequence ID" value="NZ_CP053098.1"/>
</dbReference>
<dbReference type="SMR" id="A3M1S9"/>
<dbReference type="GeneID" id="92892410"/>
<dbReference type="KEGG" id="acb:A1S_0418"/>
<dbReference type="HOGENOM" id="CLU_081378_0_3_6"/>
<dbReference type="UniPathway" id="UPA00048">
    <property type="reaction ID" value="UER00071"/>
</dbReference>
<dbReference type="GO" id="GO:0009316">
    <property type="term" value="C:3-isopropylmalate dehydratase complex"/>
    <property type="evidence" value="ECO:0007669"/>
    <property type="project" value="InterPro"/>
</dbReference>
<dbReference type="GO" id="GO:0003861">
    <property type="term" value="F:3-isopropylmalate dehydratase activity"/>
    <property type="evidence" value="ECO:0007669"/>
    <property type="project" value="UniProtKB-UniRule"/>
</dbReference>
<dbReference type="GO" id="GO:0009098">
    <property type="term" value="P:L-leucine biosynthetic process"/>
    <property type="evidence" value="ECO:0007669"/>
    <property type="project" value="UniProtKB-UniRule"/>
</dbReference>
<dbReference type="CDD" id="cd01577">
    <property type="entry name" value="IPMI_Swivel"/>
    <property type="match status" value="1"/>
</dbReference>
<dbReference type="FunFam" id="3.20.19.10:FF:000003">
    <property type="entry name" value="3-isopropylmalate dehydratase small subunit"/>
    <property type="match status" value="1"/>
</dbReference>
<dbReference type="Gene3D" id="3.20.19.10">
    <property type="entry name" value="Aconitase, domain 4"/>
    <property type="match status" value="1"/>
</dbReference>
<dbReference type="HAMAP" id="MF_01031">
    <property type="entry name" value="LeuD_type1"/>
    <property type="match status" value="1"/>
</dbReference>
<dbReference type="InterPro" id="IPR004431">
    <property type="entry name" value="3-IsopropMal_deHydase_ssu"/>
</dbReference>
<dbReference type="InterPro" id="IPR015928">
    <property type="entry name" value="Aconitase/3IPM_dehydase_swvl"/>
</dbReference>
<dbReference type="InterPro" id="IPR000573">
    <property type="entry name" value="AconitaseA/IPMdHydase_ssu_swvl"/>
</dbReference>
<dbReference type="InterPro" id="IPR033940">
    <property type="entry name" value="IPMI_Swivel"/>
</dbReference>
<dbReference type="InterPro" id="IPR050075">
    <property type="entry name" value="LeuD"/>
</dbReference>
<dbReference type="NCBIfam" id="TIGR00171">
    <property type="entry name" value="leuD"/>
    <property type="match status" value="1"/>
</dbReference>
<dbReference type="NCBIfam" id="NF002458">
    <property type="entry name" value="PRK01641.1"/>
    <property type="match status" value="1"/>
</dbReference>
<dbReference type="PANTHER" id="PTHR43345:SF5">
    <property type="entry name" value="3-ISOPROPYLMALATE DEHYDRATASE SMALL SUBUNIT"/>
    <property type="match status" value="1"/>
</dbReference>
<dbReference type="PANTHER" id="PTHR43345">
    <property type="entry name" value="3-ISOPROPYLMALATE DEHYDRATASE SMALL SUBUNIT 2-RELATED-RELATED"/>
    <property type="match status" value="1"/>
</dbReference>
<dbReference type="Pfam" id="PF00694">
    <property type="entry name" value="Aconitase_C"/>
    <property type="match status" value="1"/>
</dbReference>
<dbReference type="SUPFAM" id="SSF52016">
    <property type="entry name" value="LeuD/IlvD-like"/>
    <property type="match status" value="1"/>
</dbReference>
<gene>
    <name evidence="1" type="primary">leuD</name>
    <name type="ordered locus">A1S_0418</name>
</gene>
<accession>A3M1S9</accession>
<evidence type="ECO:0000255" key="1">
    <source>
        <dbReference type="HAMAP-Rule" id="MF_01031"/>
    </source>
</evidence>
<feature type="chain" id="PRO_1000063720" description="3-isopropylmalate dehydratase small subunit">
    <location>
        <begin position="1"/>
        <end position="215"/>
    </location>
</feature>
<reference key="1">
    <citation type="journal article" date="2007" name="Genes Dev.">
        <title>New insights into Acinetobacter baumannii pathogenesis revealed by high-density pyrosequencing and transposon mutagenesis.</title>
        <authorList>
            <person name="Smith M.G."/>
            <person name="Gianoulis T.A."/>
            <person name="Pukatzki S."/>
            <person name="Mekalanos J.J."/>
            <person name="Ornston L.N."/>
            <person name="Gerstein M."/>
            <person name="Snyder M."/>
        </authorList>
    </citation>
    <scope>NUCLEOTIDE SEQUENCE [LARGE SCALE GENOMIC DNA]</scope>
    <source>
        <strain>ATCC 17978 / DSM 105126 / CIP 53.77 / LMG 1025 / NCDC KC755 / 5377</strain>
    </source>
</reference>
<comment type="function">
    <text evidence="1">Catalyzes the isomerization between 2-isopropylmalate and 3-isopropylmalate, via the formation of 2-isopropylmaleate.</text>
</comment>
<comment type="catalytic activity">
    <reaction evidence="1">
        <text>(2R,3S)-3-isopropylmalate = (2S)-2-isopropylmalate</text>
        <dbReference type="Rhea" id="RHEA:32287"/>
        <dbReference type="ChEBI" id="CHEBI:1178"/>
        <dbReference type="ChEBI" id="CHEBI:35121"/>
        <dbReference type="EC" id="4.2.1.33"/>
    </reaction>
</comment>
<comment type="pathway">
    <text evidence="1">Amino-acid biosynthesis; L-leucine biosynthesis; L-leucine from 3-methyl-2-oxobutanoate: step 2/4.</text>
</comment>
<comment type="subunit">
    <text evidence="1">Heterodimer of LeuC and LeuD.</text>
</comment>
<comment type="similarity">
    <text evidence="1">Belongs to the LeuD family. LeuD type 1 subfamily.</text>
</comment>
<sequence length="215" mass="24371">MKAYTVEQGIVAPLDRANVDTDLIIPKQFLKSIKRTGFGDNLFDELRYLDEGYPGQDNSVRPKNPDFVLNQPRYQGATVLIARTNFGCGSSREHAPWALNEYGFRTVIAPSFADIFFNNCFKNGMLPVILPEDIVDQLFKECAAQEGYQLTIDLAAQEVRTPTGEAFKFEVDPFRKHCLLNGLDDIGLTLQNADAIRAYEEKTKQVRPWVFQEIN</sequence>
<proteinExistence type="inferred from homology"/>
<name>LEUD_ACIBT</name>
<protein>
    <recommendedName>
        <fullName evidence="1">3-isopropylmalate dehydratase small subunit</fullName>
        <ecNumber evidence="1">4.2.1.33</ecNumber>
    </recommendedName>
    <alternativeName>
        <fullName evidence="1">Alpha-IPM isomerase</fullName>
        <shortName evidence="1">IPMI</shortName>
    </alternativeName>
    <alternativeName>
        <fullName evidence="1">Isopropylmalate isomerase</fullName>
    </alternativeName>
</protein>
<keyword id="KW-0028">Amino-acid biosynthesis</keyword>
<keyword id="KW-0100">Branched-chain amino acid biosynthesis</keyword>
<keyword id="KW-0432">Leucine biosynthesis</keyword>
<keyword id="KW-0456">Lyase</keyword>
<organism>
    <name type="scientific">Acinetobacter baumannii (strain ATCC 17978 / DSM 105126 / CIP 53.77 / LMG 1025 / NCDC KC755 / 5377)</name>
    <dbReference type="NCBI Taxonomy" id="400667"/>
    <lineage>
        <taxon>Bacteria</taxon>
        <taxon>Pseudomonadati</taxon>
        <taxon>Pseudomonadota</taxon>
        <taxon>Gammaproteobacteria</taxon>
        <taxon>Moraxellales</taxon>
        <taxon>Moraxellaceae</taxon>
        <taxon>Acinetobacter</taxon>
        <taxon>Acinetobacter calcoaceticus/baumannii complex</taxon>
    </lineage>
</organism>